<protein>
    <recommendedName>
        <fullName evidence="7">Salivary alpha-glucosidase</fullName>
        <shortName evidence="7">AeGluc</shortName>
        <ecNumber evidence="3 4">3.2.1.20</ecNumber>
    </recommendedName>
    <alternativeName>
        <fullName evidence="5">Maltase-like I</fullName>
    </alternativeName>
    <alternativeName>
        <fullName>Probable maltase</fullName>
    </alternativeName>
    <allergenName evidence="6">Aed a 4</allergenName>
</protein>
<keyword id="KW-0002">3D-structure</keyword>
<keyword id="KW-0020">Allergen</keyword>
<keyword id="KW-0025">Alternative splicing</keyword>
<keyword id="KW-0106">Calcium</keyword>
<keyword id="KW-0325">Glycoprotein</keyword>
<keyword id="KW-0326">Glycosidase</keyword>
<keyword id="KW-0378">Hydrolase</keyword>
<keyword id="KW-1185">Reference proteome</keyword>
<keyword id="KW-0964">Secreted</keyword>
<keyword id="KW-0732">Signal</keyword>
<dbReference type="EC" id="3.2.1.20" evidence="3 4"/>
<dbReference type="EMBL" id="M30442">
    <property type="protein sequence ID" value="AAA29352.1"/>
    <property type="molecule type" value="mRNA"/>
</dbReference>
<dbReference type="EMBL" id="M30443">
    <property type="protein sequence ID" value="AAA29351.1"/>
    <property type="molecule type" value="Genomic_DNA"/>
</dbReference>
<dbReference type="EMBL" id="CH477192">
    <property type="protein sequence ID" value="EAT48589.1"/>
    <property type="molecule type" value="Genomic_DNA"/>
</dbReference>
<dbReference type="EMBL" id="CH477192">
    <property type="protein sequence ID" value="EAT48590.1"/>
    <property type="molecule type" value="Genomic_DNA"/>
</dbReference>
<dbReference type="PIR" id="JT0494">
    <property type="entry name" value="JT0494"/>
</dbReference>
<dbReference type="RefSeq" id="XP_001656069.1">
    <property type="nucleotide sequence ID" value="XM_001656019.1"/>
</dbReference>
<dbReference type="RefSeq" id="XP_001656070.1">
    <property type="nucleotide sequence ID" value="XM_001656020.1"/>
</dbReference>
<dbReference type="RefSeq" id="XP_001660189.1">
    <molecule id="P13080-1"/>
    <property type="nucleotide sequence ID" value="XM_001660139.1"/>
</dbReference>
<dbReference type="PDB" id="8SLV">
    <property type="method" value="X-ray"/>
    <property type="resolution" value="2.32 A"/>
    <property type="chains" value="A=1-579"/>
</dbReference>
<dbReference type="PDBsum" id="8SLV"/>
<dbReference type="SMR" id="P13080"/>
<dbReference type="STRING" id="7159.P13080"/>
<dbReference type="Allergome" id="11944">
    <property type="allergen name" value="Aed a 4.0101"/>
</dbReference>
<dbReference type="Allergome" id="1293">
    <property type="allergen name" value="Aed a 4"/>
</dbReference>
<dbReference type="CAZy" id="GH13">
    <property type="family name" value="Glycoside Hydrolase Family 13"/>
</dbReference>
<dbReference type="GlyCosmos" id="P13080">
    <property type="glycosylation" value="6 sites, No reported glycans"/>
</dbReference>
<dbReference type="PaxDb" id="7159-AAEL000392-PB"/>
<dbReference type="EnsemblMetazoa" id="AAEL009524-RA">
    <molecule id="P13080-1"/>
    <property type="protein sequence ID" value="AAEL009524-PA"/>
    <property type="gene ID" value="AAEL009524"/>
</dbReference>
<dbReference type="GeneID" id="5572111"/>
<dbReference type="KEGG" id="aag:5572111"/>
<dbReference type="VEuPathDB" id="VectorBase:AAEL009524"/>
<dbReference type="eggNOG" id="KOG0471">
    <property type="taxonomic scope" value="Eukaryota"/>
</dbReference>
<dbReference type="HOGENOM" id="CLU_006462_2_3_1"/>
<dbReference type="InParanoid" id="P13080"/>
<dbReference type="OMA" id="WKSAFRY"/>
<dbReference type="OrthoDB" id="1740265at2759"/>
<dbReference type="PhylomeDB" id="P13080"/>
<dbReference type="Proteomes" id="UP000008820">
    <property type="component" value="Chromosome 3"/>
</dbReference>
<dbReference type="Proteomes" id="UP000682892">
    <property type="component" value="Unassembled WGS sequence"/>
</dbReference>
<dbReference type="GO" id="GO:0005576">
    <property type="term" value="C:extracellular region"/>
    <property type="evidence" value="ECO:0007669"/>
    <property type="project" value="UniProtKB-SubCell"/>
</dbReference>
<dbReference type="GO" id="GO:0004558">
    <property type="term" value="F:alpha-1,4-glucosidase activity"/>
    <property type="evidence" value="ECO:0007669"/>
    <property type="project" value="UniProtKB-EC"/>
</dbReference>
<dbReference type="GO" id="GO:0005975">
    <property type="term" value="P:carbohydrate metabolic process"/>
    <property type="evidence" value="ECO:0007669"/>
    <property type="project" value="InterPro"/>
</dbReference>
<dbReference type="CDD" id="cd11328">
    <property type="entry name" value="AmyAc_maltase"/>
    <property type="match status" value="1"/>
</dbReference>
<dbReference type="FunFam" id="3.90.400.10:FF:000001">
    <property type="entry name" value="Maltase A3, isoform A"/>
    <property type="match status" value="1"/>
</dbReference>
<dbReference type="Gene3D" id="3.20.20.80">
    <property type="entry name" value="Glycosidases"/>
    <property type="match status" value="1"/>
</dbReference>
<dbReference type="Gene3D" id="3.90.400.10">
    <property type="entry name" value="Oligo-1,6-glucosidase, Domain 2"/>
    <property type="match status" value="1"/>
</dbReference>
<dbReference type="InterPro" id="IPR006047">
    <property type="entry name" value="Glyco_hydro_13_cat_dom"/>
</dbReference>
<dbReference type="InterPro" id="IPR017853">
    <property type="entry name" value="Glycoside_hydrolase_SF"/>
</dbReference>
<dbReference type="InterPro" id="IPR045857">
    <property type="entry name" value="O16G_dom_2"/>
</dbReference>
<dbReference type="PANTHER" id="PTHR10357">
    <property type="entry name" value="ALPHA-AMYLASE FAMILY MEMBER"/>
    <property type="match status" value="1"/>
</dbReference>
<dbReference type="PANTHER" id="PTHR10357:SF233">
    <property type="entry name" value="MALTASE A1"/>
    <property type="match status" value="1"/>
</dbReference>
<dbReference type="Pfam" id="PF00128">
    <property type="entry name" value="Alpha-amylase"/>
    <property type="match status" value="1"/>
</dbReference>
<dbReference type="SMART" id="SM00642">
    <property type="entry name" value="Aamy"/>
    <property type="match status" value="1"/>
</dbReference>
<dbReference type="SUPFAM" id="SSF51445">
    <property type="entry name" value="(Trans)glycosidases"/>
    <property type="match status" value="1"/>
</dbReference>
<feature type="signal peptide" evidence="2">
    <location>
        <begin position="1"/>
        <end position="18"/>
    </location>
</feature>
<feature type="chain" id="PRO_0000001451" description="Salivary alpha-glucosidase">
    <location>
        <begin position="19"/>
        <end position="579"/>
    </location>
</feature>
<feature type="active site" description="Nucleophile" evidence="1">
    <location>
        <position position="219"/>
    </location>
</feature>
<feature type="active site" description="Proton donor" evidence="1">
    <location>
        <position position="290"/>
    </location>
</feature>
<feature type="binding site" evidence="4 9">
    <location>
        <position position="37"/>
    </location>
    <ligand>
        <name>Ca(2+)</name>
        <dbReference type="ChEBI" id="CHEBI:29108"/>
        <label>1</label>
    </ligand>
</feature>
<feature type="binding site" evidence="4 9">
    <location>
        <position position="39"/>
    </location>
    <ligand>
        <name>Ca(2+)</name>
        <dbReference type="ChEBI" id="CHEBI:29108"/>
        <label>1</label>
    </ligand>
</feature>
<feature type="binding site" evidence="4 9">
    <location>
        <position position="41"/>
    </location>
    <ligand>
        <name>Ca(2+)</name>
        <dbReference type="ChEBI" id="CHEBI:29108"/>
        <label>1</label>
    </ligand>
</feature>
<feature type="binding site" evidence="4 9">
    <location>
        <position position="43"/>
    </location>
    <ligand>
        <name>Ca(2+)</name>
        <dbReference type="ChEBI" id="CHEBI:29108"/>
        <label>1</label>
    </ligand>
</feature>
<feature type="binding site" evidence="4 9">
    <location>
        <position position="45"/>
    </location>
    <ligand>
        <name>Ca(2+)</name>
        <dbReference type="ChEBI" id="CHEBI:29108"/>
        <label>1</label>
    </ligand>
</feature>
<feature type="binding site" evidence="4 9">
    <location>
        <position position="118"/>
    </location>
    <ligand>
        <name>Ca(2+)</name>
        <dbReference type="ChEBI" id="CHEBI:29108"/>
        <label>2</label>
    </ligand>
</feature>
<feature type="binding site" evidence="4 9">
    <location>
        <position position="189"/>
    </location>
    <ligand>
        <name>Ca(2+)</name>
        <dbReference type="ChEBI" id="CHEBI:29108"/>
        <label>2</label>
    </ligand>
</feature>
<feature type="binding site" evidence="4 9">
    <location>
        <position position="223"/>
    </location>
    <ligand>
        <name>Ca(2+)</name>
        <dbReference type="ChEBI" id="CHEBI:29108"/>
        <label>2</label>
    </ligand>
</feature>
<feature type="binding site" evidence="4 9">
    <location>
        <position position="224"/>
    </location>
    <ligand>
        <name>Ca(2+)</name>
        <dbReference type="ChEBI" id="CHEBI:29108"/>
        <label>2</label>
    </ligand>
</feature>
<feature type="binding site" evidence="4 9">
    <location>
        <position position="226"/>
    </location>
    <ligand>
        <name>Ca(2+)</name>
        <dbReference type="ChEBI" id="CHEBI:29108"/>
        <label>2</label>
    </ligand>
</feature>
<feature type="binding site" evidence="4 9">
    <location>
        <position position="325"/>
    </location>
    <ligand>
        <name>N-acetyl-beta-D-glucosamine</name>
        <dbReference type="ChEBI" id="CHEBI:28009"/>
    </ligand>
</feature>
<feature type="site" description="Transition state stabilizer" evidence="1">
    <location>
        <position position="356"/>
    </location>
</feature>
<feature type="glycosylation site" description="N-linked (GlcNAc...) asparagine" evidence="2">
    <location>
        <position position="118"/>
    </location>
</feature>
<feature type="glycosylation site" description="N-linked (GlcNAc...) asparagine" evidence="2">
    <location>
        <position position="151"/>
    </location>
</feature>
<feature type="glycosylation site" description="N-linked (GlcNAc...) asparagine" evidence="2">
    <location>
        <position position="282"/>
    </location>
</feature>
<feature type="glycosylation site" description="N-linked (GlcNAc...) asparagine" evidence="2">
    <location>
        <position position="304"/>
    </location>
</feature>
<feature type="glycosylation site" description="N-linked (GlcNAc...) asparagine" evidence="2">
    <location>
        <position position="325"/>
    </location>
</feature>
<feature type="glycosylation site" description="N-linked (GlcNAc...) asparagine" evidence="2">
    <location>
        <position position="401"/>
    </location>
</feature>
<feature type="splice variant" id="VSP_027479" description="In isoform A." evidence="8">
    <location>
        <begin position="1"/>
        <end position="60"/>
    </location>
</feature>
<feature type="turn" evidence="10">
    <location>
        <begin position="21"/>
        <end position="24"/>
    </location>
</feature>
<feature type="strand" evidence="10">
    <location>
        <begin position="26"/>
        <end position="30"/>
    </location>
</feature>
<feature type="helix" evidence="10">
    <location>
        <begin position="32"/>
        <end position="35"/>
    </location>
</feature>
<feature type="strand" evidence="10">
    <location>
        <begin position="38"/>
        <end position="43"/>
    </location>
</feature>
<feature type="helix" evidence="10">
    <location>
        <begin position="46"/>
        <end position="58"/>
    </location>
</feature>
<feature type="strand" evidence="10">
    <location>
        <begin position="62"/>
        <end position="66"/>
    </location>
</feature>
<feature type="turn" evidence="10">
    <location>
        <begin position="75"/>
        <end position="78"/>
    </location>
</feature>
<feature type="strand" evidence="10">
    <location>
        <begin position="82"/>
        <end position="87"/>
    </location>
</feature>
<feature type="helix" evidence="10">
    <location>
        <begin position="89"/>
        <end position="91"/>
    </location>
</feature>
<feature type="helix" evidence="10">
    <location>
        <begin position="94"/>
        <end position="107"/>
    </location>
</feature>
<feature type="strand" evidence="10">
    <location>
        <begin position="110"/>
        <end position="115"/>
    </location>
</feature>
<feature type="helix" evidence="10">
    <location>
        <begin position="125"/>
        <end position="131"/>
    </location>
</feature>
<feature type="turn" evidence="10">
    <location>
        <begin position="135"/>
        <end position="139"/>
    </location>
</feature>
<feature type="strand" evidence="10">
    <location>
        <begin position="147"/>
        <end position="149"/>
    </location>
</feature>
<feature type="turn" evidence="10">
    <location>
        <begin position="150"/>
        <end position="152"/>
    </location>
</feature>
<feature type="strand" evidence="10">
    <location>
        <begin position="153"/>
        <end position="155"/>
    </location>
</feature>
<feature type="strand" evidence="10">
    <location>
        <begin position="165"/>
        <end position="172"/>
    </location>
</feature>
<feature type="turn" evidence="10">
    <location>
        <begin position="173"/>
        <end position="176"/>
    </location>
</feature>
<feature type="strand" evidence="10">
    <location>
        <begin position="177"/>
        <end position="180"/>
    </location>
</feature>
<feature type="helix" evidence="10">
    <location>
        <begin position="195"/>
        <end position="209"/>
    </location>
</feature>
<feature type="turn" evidence="10">
    <location>
        <begin position="210"/>
        <end position="212"/>
    </location>
</feature>
<feature type="strand" evidence="10">
    <location>
        <begin position="215"/>
        <end position="218"/>
    </location>
</feature>
<feature type="helix" evidence="10">
    <location>
        <begin position="221"/>
        <end position="223"/>
    </location>
</feature>
<feature type="helix" evidence="10">
    <location>
        <begin position="249"/>
        <end position="251"/>
    </location>
</feature>
<feature type="turn" evidence="10">
    <location>
        <begin position="255"/>
        <end position="257"/>
    </location>
</feature>
<feature type="helix" evidence="10">
    <location>
        <begin position="261"/>
        <end position="281"/>
    </location>
</feature>
<feature type="strand" evidence="10">
    <location>
        <begin position="286"/>
        <end position="289"/>
    </location>
</feature>
<feature type="helix" evidence="10">
    <location>
        <begin position="295"/>
        <end position="299"/>
    </location>
</feature>
<feature type="helix" evidence="10">
    <location>
        <begin position="300"/>
        <end position="302"/>
    </location>
</feature>
<feature type="strand" evidence="10">
    <location>
        <begin position="311"/>
        <end position="313"/>
    </location>
</feature>
<feature type="helix" evidence="10">
    <location>
        <begin position="316"/>
        <end position="321"/>
    </location>
</feature>
<feature type="helix" evidence="10">
    <location>
        <begin position="328"/>
        <end position="341"/>
    </location>
</feature>
<feature type="helix" evidence="10">
    <location>
        <begin position="360"/>
        <end position="364"/>
    </location>
</feature>
<feature type="helix" evidence="10">
    <location>
        <begin position="366"/>
        <end position="368"/>
    </location>
</feature>
<feature type="helix" evidence="10">
    <location>
        <begin position="369"/>
        <end position="378"/>
    </location>
</feature>
<feature type="strand" evidence="10">
    <location>
        <begin position="379"/>
        <end position="386"/>
    </location>
</feature>
<feature type="helix" evidence="10">
    <location>
        <begin position="389"/>
        <end position="391"/>
    </location>
</feature>
<feature type="helix" evidence="10">
    <location>
        <begin position="400"/>
        <end position="402"/>
    </location>
</feature>
<feature type="helix" evidence="10">
    <location>
        <begin position="406"/>
        <end position="409"/>
    </location>
</feature>
<feature type="turn" evidence="10">
    <location>
        <begin position="413"/>
        <end position="415"/>
    </location>
</feature>
<feature type="helix" evidence="10">
    <location>
        <begin position="416"/>
        <end position="418"/>
    </location>
</feature>
<feature type="helix" evidence="10">
    <location>
        <begin position="422"/>
        <end position="424"/>
    </location>
</feature>
<feature type="helix" evidence="10">
    <location>
        <begin position="434"/>
        <end position="437"/>
    </location>
</feature>
<feature type="strand" evidence="10">
    <location>
        <begin position="441"/>
        <end position="443"/>
    </location>
</feature>
<feature type="turn" evidence="10">
    <location>
        <begin position="450"/>
        <end position="454"/>
    </location>
</feature>
<feature type="helix" evidence="10">
    <location>
        <begin position="457"/>
        <end position="462"/>
    </location>
</feature>
<feature type="strand" evidence="10">
    <location>
        <begin position="463"/>
        <end position="465"/>
    </location>
</feature>
<feature type="helix" evidence="10">
    <location>
        <begin position="467"/>
        <end position="477"/>
    </location>
</feature>
<feature type="helix" evidence="10">
    <location>
        <begin position="481"/>
        <end position="485"/>
    </location>
</feature>
<feature type="strand" evidence="10">
    <location>
        <begin position="489"/>
        <end position="493"/>
    </location>
</feature>
<feature type="turn" evidence="10">
    <location>
        <begin position="494"/>
        <end position="496"/>
    </location>
</feature>
<feature type="strand" evidence="10">
    <location>
        <begin position="497"/>
        <end position="504"/>
    </location>
</feature>
<feature type="turn" evidence="10">
    <location>
        <begin position="505"/>
        <end position="507"/>
    </location>
</feature>
<feature type="strand" evidence="10">
    <location>
        <begin position="508"/>
        <end position="515"/>
    </location>
</feature>
<feature type="strand" evidence="10">
    <location>
        <begin position="517"/>
        <end position="519"/>
    </location>
</feature>
<feature type="helix" evidence="10">
    <location>
        <begin position="525"/>
        <end position="527"/>
    </location>
</feature>
<feature type="strand" evidence="10">
    <location>
        <begin position="534"/>
        <end position="541"/>
    </location>
</feature>
<feature type="strand" evidence="10">
    <location>
        <begin position="552"/>
        <end position="554"/>
    </location>
</feature>
<feature type="turn" evidence="10">
    <location>
        <begin position="555"/>
        <end position="557"/>
    </location>
</feature>
<feature type="strand" evidence="10">
    <location>
        <begin position="564"/>
        <end position="573"/>
    </location>
</feature>
<organism>
    <name type="scientific">Aedes aegypti</name>
    <name type="common">Yellowfever mosquito</name>
    <name type="synonym">Culex aegypti</name>
    <dbReference type="NCBI Taxonomy" id="7159"/>
    <lineage>
        <taxon>Eukaryota</taxon>
        <taxon>Metazoa</taxon>
        <taxon>Ecdysozoa</taxon>
        <taxon>Arthropoda</taxon>
        <taxon>Hexapoda</taxon>
        <taxon>Insecta</taxon>
        <taxon>Pterygota</taxon>
        <taxon>Neoptera</taxon>
        <taxon>Endopterygota</taxon>
        <taxon>Diptera</taxon>
        <taxon>Nematocera</taxon>
        <taxon>Culicoidea</taxon>
        <taxon>Culicidae</taxon>
        <taxon>Culicinae</taxon>
        <taxon>Aedini</taxon>
        <taxon>Aedes</taxon>
        <taxon>Stegomyia</taxon>
    </lineage>
</organism>
<gene>
    <name evidence="5" type="primary">MAL1</name>
    <name type="synonym">MAL I</name>
    <name type="ORF">AAEL000392</name>
</gene>
<reference key="1">
    <citation type="journal article" date="1989" name="Gene">
        <title>A salivary gland-specific, maltase-like gene of the vector mosquito, Aedes aegypti.</title>
        <authorList>
            <person name="James A.A."/>
            <person name="Blackmer K."/>
            <person name="Racioppi J.V."/>
        </authorList>
    </citation>
    <scope>NUCLEOTIDE SEQUENCE [GENOMIC DNA / MRNA] (ISOFORM B)</scope>
    <source>
        <strain>Bahama</strain>
        <strain>Rockefeller</strain>
        <tissue>Salivary gland</tissue>
    </source>
</reference>
<reference key="2">
    <citation type="journal article" date="2007" name="Science">
        <title>Genome sequence of Aedes aegypti, a major arbovirus vector.</title>
        <authorList>
            <person name="Nene V."/>
            <person name="Wortman J.R."/>
            <person name="Lawson D."/>
            <person name="Haas B.J."/>
            <person name="Kodira C.D."/>
            <person name="Tu Z.J."/>
            <person name="Loftus B.J."/>
            <person name="Xi Z."/>
            <person name="Megy K."/>
            <person name="Grabherr M."/>
            <person name="Ren Q."/>
            <person name="Zdobnov E.M."/>
            <person name="Lobo N.F."/>
            <person name="Campbell K.S."/>
            <person name="Brown S.E."/>
            <person name="Bonaldo M.F."/>
            <person name="Zhu J."/>
            <person name="Sinkins S.P."/>
            <person name="Hogenkamp D.G."/>
            <person name="Amedeo P."/>
            <person name="Arensburger P."/>
            <person name="Atkinson P.W."/>
            <person name="Bidwell S.L."/>
            <person name="Biedler J."/>
            <person name="Birney E."/>
            <person name="Bruggner R.V."/>
            <person name="Costas J."/>
            <person name="Coy M.R."/>
            <person name="Crabtree J."/>
            <person name="Crawford M."/>
            <person name="DeBruyn B."/>
            <person name="DeCaprio D."/>
            <person name="Eiglmeier K."/>
            <person name="Eisenstadt E."/>
            <person name="El-Dorry H."/>
            <person name="Gelbart W.M."/>
            <person name="Gomes S.L."/>
            <person name="Hammond M."/>
            <person name="Hannick L.I."/>
            <person name="Hogan J.R."/>
            <person name="Holmes M.H."/>
            <person name="Jaffe D."/>
            <person name="Johnston S.J."/>
            <person name="Kennedy R.C."/>
            <person name="Koo H."/>
            <person name="Kravitz S."/>
            <person name="Kriventseva E.V."/>
            <person name="Kulp D."/>
            <person name="Labutti K."/>
            <person name="Lee E."/>
            <person name="Li S."/>
            <person name="Lovin D.D."/>
            <person name="Mao C."/>
            <person name="Mauceli E."/>
            <person name="Menck C.F."/>
            <person name="Miller J.R."/>
            <person name="Montgomery P."/>
            <person name="Mori A."/>
            <person name="Nascimento A.L."/>
            <person name="Naveira H.F."/>
            <person name="Nusbaum C."/>
            <person name="O'Leary S.B."/>
            <person name="Orvis J."/>
            <person name="Pertea M."/>
            <person name="Quesneville H."/>
            <person name="Reidenbach K.R."/>
            <person name="Rogers Y.-H.C."/>
            <person name="Roth C.W."/>
            <person name="Schneider J.R."/>
            <person name="Schatz M."/>
            <person name="Shumway M."/>
            <person name="Stanke M."/>
            <person name="Stinson E.O."/>
            <person name="Tubio J.M.C."/>
            <person name="Vanzee J.P."/>
            <person name="Verjovski-Almeida S."/>
            <person name="Werner D."/>
            <person name="White O.R."/>
            <person name="Wyder S."/>
            <person name="Zeng Q."/>
            <person name="Zhao Q."/>
            <person name="Zhao Y."/>
            <person name="Hill C.A."/>
            <person name="Raikhel A.S."/>
            <person name="Soares M.B."/>
            <person name="Knudson D.L."/>
            <person name="Lee N.H."/>
            <person name="Galagan J."/>
            <person name="Salzberg S.L."/>
            <person name="Paulsen I.T."/>
            <person name="Dimopoulos G."/>
            <person name="Collins F.H."/>
            <person name="Bruce B."/>
            <person name="Fraser-Liggett C.M."/>
            <person name="Severson D.W."/>
        </authorList>
    </citation>
    <scope>NUCLEOTIDE SEQUENCE [LARGE SCALE GENOMIC DNA]</scope>
    <scope>ALTERNATIVE SPLICING</scope>
    <source>
        <strain>LVPib12</strain>
    </source>
</reference>
<reference key="3">
    <citation type="journal article" date="2016" name="Int. Arch. Allergy Immunol.">
        <title>rAed a 4: A New 67-kDa Aedes aegypti Mosquito Salivary Allergen for the Diagnosis of Mosquito Allergy.</title>
        <authorList>
            <person name="Peng Z."/>
            <person name="Caihe L."/>
            <person name="Beckett A.N."/>
            <person name="Guan Q."/>
            <person name="James A.A."/>
            <person name="Simons F.E."/>
        </authorList>
    </citation>
    <scope>FUNCTION</scope>
    <scope>CATALYTIC ACTIVITY</scope>
    <scope>SUBCELLULAR LOCATION</scope>
    <scope>TISSUE SPECIFICITY</scope>
    <scope>ALLERGEN</scope>
</reference>
<reference evidence="9" key="4">
    <citation type="journal article" date="2024" name="Insect Biochem. Mol. Biol.">
        <title>Structural and functional comparisons of salivary alpha-glucosidases from the mosquito vectors Aedes aegypti, Anopheles gambiae, and Culex quinquefasciatus.</title>
        <authorList>
            <person name="Williams A.E."/>
            <person name="Gittis A.G."/>
            <person name="Botello K."/>
            <person name="Cruz P."/>
            <person name="Martin-Martin I."/>
            <person name="Valenzuela Leon P.C."/>
            <person name="Sumner B."/>
            <person name="Bonilla B."/>
            <person name="Calvo E."/>
        </authorList>
    </citation>
    <scope>X-RAY CRYSTALLOGRAPHY (2.32 ANGSTROMS) IN COMPLEX WITH N-ACETYL-BETA-D-GLUCOSAMINE AND CA(2+)</scope>
    <scope>FUNCTION</scope>
    <scope>CATALYTIC ACTIVITY</scope>
    <scope>BIOPHYSICOCHEMICAL PROPERTIES</scope>
    <scope>SUBCELLULAR LOCATION</scope>
    <scope>TISSUE SPECIFICITY</scope>
</reference>
<sequence length="579" mass="66683">MKIFVPLLSFLLAGLTTGLDWWEHGNFYQVYPRSFKDSDGDGIGDLDGVTEKLKYLKDIGMDGVWLSPIFSSPMADFGYDISNFREIQTEYGDLDAFQRLSDKCKQLGLHLILDFVPNHTSDQHEYFKKSVQKDETYKDFYVWHPGVHGPNNTKVPPSNWISVFRGSSWEWNEERQEFYLHQFLKEQPDLNYRNPAVVEEMKNVLRYWLDRGVSGFRIDAVPYLFESDIIDGRYRNEPESRTTDDPENPAYLVHTQTMDQPETYDMIYQWRAVLDEYSKTDNRTRIMMTEGYTSLPKIIEFFGNATANGAQIPFNFEVISNVKKNSTGADFATYVKRWLDAKPANRRSNWVLGNHDNNRLGSRLGENKIDLYNIALQTLPDIAVTYYGEEIGMLDQWIPWNETVDPAACRSDEASYSAYSRDPARTPMQWDSGKNAGFSKAAKTWLPVADNYKTLNVKIQDRARKSHLKIFKKLTKYRKRQILTEGDIDIKVSGENLLVYKRKVDKVGYVVVALNFGTEPVALGLSSLFDRADQRMQVVVSSNRVSTPDNVWVDVDNYVLIGESGIVLQYLWGKNPIVS</sequence>
<accession>P13080</accession>
<accession>Q0IGE8</accession>
<accession>Q0IGE9</accession>
<name>MALT_AEDAE</name>
<evidence type="ECO:0000250" key="1"/>
<evidence type="ECO:0000255" key="2"/>
<evidence type="ECO:0000269" key="3">
    <source>
    </source>
</evidence>
<evidence type="ECO:0000269" key="4">
    <source>
    </source>
</evidence>
<evidence type="ECO:0000303" key="5">
    <source>
    </source>
</evidence>
<evidence type="ECO:0000303" key="6">
    <source>
    </source>
</evidence>
<evidence type="ECO:0000303" key="7">
    <source>
    </source>
</evidence>
<evidence type="ECO:0000305" key="8"/>
<evidence type="ECO:0007744" key="9">
    <source>
        <dbReference type="PDB" id="8SLV"/>
    </source>
</evidence>
<evidence type="ECO:0007829" key="10">
    <source>
        <dbReference type="PDB" id="8SLV"/>
    </source>
</evidence>
<comment type="function">
    <text evidence="4 6 7">Functions as a glucosidase that shows high activity toward sucrose, a major component of nectar (PubMed:38428508). Assists the mosquito in its sugar-feeding capabilities (PubMed:27603527, PubMed:38428508).</text>
</comment>
<comment type="catalytic activity">
    <reaction evidence="3 4">
        <text>Hydrolysis of terminal, non-reducing (1-&gt;4)-linked alpha-D-glucose residues with release of alpha-D-glucose.</text>
        <dbReference type="EC" id="3.2.1.20"/>
    </reaction>
</comment>
<comment type="biophysicochemical properties">
    <kinetics>
        <KM evidence="4">47.6 mM for sucrose</KM>
        <text evidence="4">kcat is 48.3 min(-1) with sucrose as substrate.</text>
    </kinetics>
</comment>
<comment type="subcellular location">
    <subcellularLocation>
        <location evidence="3 4">Secreted</location>
    </subcellularLocation>
</comment>
<comment type="alternative products">
    <event type="alternative splicing"/>
    <isoform>
        <id>P13080-1</id>
        <name>B</name>
        <sequence type="displayed"/>
    </isoform>
    <isoform>
        <id>P13080-2</id>
        <name>A</name>
        <sequence type="described" ref="VSP_027479"/>
    </isoform>
</comment>
<comment type="tissue specificity">
    <text evidence="3 4">Saliva (at protein level) (PubMed:27603527, PubMed:38428508). Proximal lateral lobes of the salivary gland (at protein level) (PubMed:38428508).</text>
</comment>
<comment type="allergen">
    <text evidence="3">Causes an allergic reaction in human (PubMed:27603527). Binds to IgE (PubMed:27603527).</text>
</comment>
<comment type="similarity">
    <text evidence="8">Belongs to the glycosyl hydrolase 13 family.</text>
</comment>
<proteinExistence type="evidence at protein level"/>